<name>RLMKL_YERPA</name>
<protein>
    <recommendedName>
        <fullName evidence="1">Ribosomal RNA large subunit methyltransferase K/L</fullName>
    </recommendedName>
    <domain>
        <recommendedName>
            <fullName evidence="1">23S rRNA m2G2445 methyltransferase</fullName>
            <ecNumber evidence="1">2.1.1.173</ecNumber>
        </recommendedName>
        <alternativeName>
            <fullName evidence="1">rRNA (guanine-N(2)-)-methyltransferase RlmL</fullName>
        </alternativeName>
    </domain>
    <domain>
        <recommendedName>
            <fullName evidence="1">23S rRNA m7G2069 methyltransferase</fullName>
            <ecNumber evidence="1">2.1.1.264</ecNumber>
        </recommendedName>
        <alternativeName>
            <fullName evidence="1">rRNA (guanine-N(7)-)-methyltransferase RlmK</fullName>
        </alternativeName>
    </domain>
</protein>
<evidence type="ECO:0000255" key="1">
    <source>
        <dbReference type="HAMAP-Rule" id="MF_01858"/>
    </source>
</evidence>
<dbReference type="EC" id="2.1.1.173" evidence="1"/>
<dbReference type="EC" id="2.1.1.264" evidence="1"/>
<dbReference type="EMBL" id="CP000308">
    <property type="protein sequence ID" value="ABG12681.1"/>
    <property type="molecule type" value="Genomic_DNA"/>
</dbReference>
<dbReference type="SMR" id="Q1CA41"/>
<dbReference type="KEGG" id="ypa:YPA_0713"/>
<dbReference type="Proteomes" id="UP000001971">
    <property type="component" value="Chromosome"/>
</dbReference>
<dbReference type="GO" id="GO:0005737">
    <property type="term" value="C:cytoplasm"/>
    <property type="evidence" value="ECO:0007669"/>
    <property type="project" value="UniProtKB-SubCell"/>
</dbReference>
<dbReference type="GO" id="GO:0052915">
    <property type="term" value="F:23S rRNA (guanine(2445)-N(2))-methyltransferase activity"/>
    <property type="evidence" value="ECO:0007669"/>
    <property type="project" value="UniProtKB-UniRule"/>
</dbReference>
<dbReference type="GO" id="GO:0003723">
    <property type="term" value="F:RNA binding"/>
    <property type="evidence" value="ECO:0007669"/>
    <property type="project" value="UniProtKB-KW"/>
</dbReference>
<dbReference type="GO" id="GO:0070043">
    <property type="term" value="F:rRNA (guanine-N7-)-methyltransferase activity"/>
    <property type="evidence" value="ECO:0007669"/>
    <property type="project" value="UniProtKB-UniRule"/>
</dbReference>
<dbReference type="CDD" id="cd02440">
    <property type="entry name" value="AdoMet_MTases"/>
    <property type="match status" value="2"/>
</dbReference>
<dbReference type="CDD" id="cd11715">
    <property type="entry name" value="THUMP_AdoMetMT"/>
    <property type="match status" value="1"/>
</dbReference>
<dbReference type="FunFam" id="3.30.750.80:FF:000001">
    <property type="entry name" value="Ribosomal RNA large subunit methyltransferase K/L"/>
    <property type="match status" value="1"/>
</dbReference>
<dbReference type="FunFam" id="3.40.50.150:FF:000039">
    <property type="entry name" value="Ribosomal RNA large subunit methyltransferase K/L"/>
    <property type="match status" value="1"/>
</dbReference>
<dbReference type="Gene3D" id="3.30.2130.30">
    <property type="match status" value="1"/>
</dbReference>
<dbReference type="Gene3D" id="3.30.750.80">
    <property type="entry name" value="RNA methyltransferase domain (HRMD) like"/>
    <property type="match status" value="1"/>
</dbReference>
<dbReference type="Gene3D" id="3.40.50.150">
    <property type="entry name" value="Vaccinia Virus protein VP39"/>
    <property type="match status" value="2"/>
</dbReference>
<dbReference type="HAMAP" id="MF_01858">
    <property type="entry name" value="23SrRNA_methyltr_KL"/>
    <property type="match status" value="1"/>
</dbReference>
<dbReference type="InterPro" id="IPR017244">
    <property type="entry name" value="23SrRNA_methyltr_KL"/>
</dbReference>
<dbReference type="InterPro" id="IPR002052">
    <property type="entry name" value="DNA_methylase_N6_adenine_CS"/>
</dbReference>
<dbReference type="InterPro" id="IPR000241">
    <property type="entry name" value="RlmKL-like_Mtase"/>
</dbReference>
<dbReference type="InterPro" id="IPR053943">
    <property type="entry name" value="RlmKL-like_Mtase_CS"/>
</dbReference>
<dbReference type="InterPro" id="IPR054170">
    <property type="entry name" value="RlmL_1st"/>
</dbReference>
<dbReference type="InterPro" id="IPR019614">
    <property type="entry name" value="SAM-dep_methyl-trfase"/>
</dbReference>
<dbReference type="InterPro" id="IPR029063">
    <property type="entry name" value="SAM-dependent_MTases_sf"/>
</dbReference>
<dbReference type="InterPro" id="IPR004114">
    <property type="entry name" value="THUMP_dom"/>
</dbReference>
<dbReference type="NCBIfam" id="NF008748">
    <property type="entry name" value="PRK11783.1"/>
    <property type="match status" value="1"/>
</dbReference>
<dbReference type="PANTHER" id="PTHR47313">
    <property type="entry name" value="RIBOSOMAL RNA LARGE SUBUNIT METHYLTRANSFERASE K/L"/>
    <property type="match status" value="1"/>
</dbReference>
<dbReference type="PANTHER" id="PTHR47313:SF1">
    <property type="entry name" value="RIBOSOMAL RNA LARGE SUBUNIT METHYLTRANSFERASE K_L"/>
    <property type="match status" value="1"/>
</dbReference>
<dbReference type="Pfam" id="PF10672">
    <property type="entry name" value="Methyltrans_SAM"/>
    <property type="match status" value="1"/>
</dbReference>
<dbReference type="Pfam" id="PF22020">
    <property type="entry name" value="RlmL_1st"/>
    <property type="match status" value="1"/>
</dbReference>
<dbReference type="Pfam" id="PF02926">
    <property type="entry name" value="THUMP"/>
    <property type="match status" value="1"/>
</dbReference>
<dbReference type="Pfam" id="PF01170">
    <property type="entry name" value="UPF0020"/>
    <property type="match status" value="1"/>
</dbReference>
<dbReference type="PIRSF" id="PIRSF037618">
    <property type="entry name" value="RNA_Mtase_bacteria_prd"/>
    <property type="match status" value="1"/>
</dbReference>
<dbReference type="SMART" id="SM00981">
    <property type="entry name" value="THUMP"/>
    <property type="match status" value="1"/>
</dbReference>
<dbReference type="SUPFAM" id="SSF53335">
    <property type="entry name" value="S-adenosyl-L-methionine-dependent methyltransferases"/>
    <property type="match status" value="2"/>
</dbReference>
<dbReference type="PROSITE" id="PS51165">
    <property type="entry name" value="THUMP"/>
    <property type="match status" value="1"/>
</dbReference>
<dbReference type="PROSITE" id="PS01261">
    <property type="entry name" value="UPF0020"/>
    <property type="match status" value="1"/>
</dbReference>
<organism>
    <name type="scientific">Yersinia pestis bv. Antiqua (strain Antiqua)</name>
    <dbReference type="NCBI Taxonomy" id="360102"/>
    <lineage>
        <taxon>Bacteria</taxon>
        <taxon>Pseudomonadati</taxon>
        <taxon>Pseudomonadota</taxon>
        <taxon>Gammaproteobacteria</taxon>
        <taxon>Enterobacterales</taxon>
        <taxon>Yersiniaceae</taxon>
        <taxon>Yersinia</taxon>
    </lineage>
</organism>
<reference key="1">
    <citation type="journal article" date="2006" name="J. Bacteriol.">
        <title>Complete genome sequence of Yersinia pestis strains Antiqua and Nepal516: evidence of gene reduction in an emerging pathogen.</title>
        <authorList>
            <person name="Chain P.S.G."/>
            <person name="Hu P."/>
            <person name="Malfatti S.A."/>
            <person name="Radnedge L."/>
            <person name="Larimer F."/>
            <person name="Vergez L.M."/>
            <person name="Worsham P."/>
            <person name="Chu M.C."/>
            <person name="Andersen G.L."/>
        </authorList>
    </citation>
    <scope>NUCLEOTIDE SEQUENCE [LARGE SCALE GENOMIC DNA]</scope>
    <source>
        <strain>Antiqua</strain>
    </source>
</reference>
<keyword id="KW-0963">Cytoplasm</keyword>
<keyword id="KW-0489">Methyltransferase</keyword>
<keyword id="KW-0694">RNA-binding</keyword>
<keyword id="KW-0698">rRNA processing</keyword>
<keyword id="KW-0949">S-adenosyl-L-methionine</keyword>
<keyword id="KW-0808">Transferase</keyword>
<gene>
    <name evidence="1" type="primary">rlmL</name>
    <name type="ordered locus">YPA_0713</name>
</gene>
<sequence>MNSLFASTARGLEELLKSELEALGAHDCKIVQGGVHFQGDDRLMYQSLLWSRLASRILLPLNEFKVYSDLDLYLGVQAIDWPSIFGVDKTFAVHFSGVNDEIRNSQYGALKVKDAIVDSFTRKMDQRPTVAKQQPDIRVNVFLQRDMASVALDLSGEGLHQRGYRDLTGQAPLKENLAAAIIQRSGWQPGTPMVDPMCGSGTLLIEAAMMASDRAPGLHRGHWGFTAWNAFNEALWRELTTEAQVRARRGLLETSSRFFGSDIDRRVIEMARANARRAGVAELITFNANDISKLVNPLPEGPVGTVISNPPYGERLESEPALIALHNMFGRMMKTAFGGWRLSLFSASPELLSCLQLRADREFKAKNGPLDCVQKNYQLTANPLGAGGALVAEDYANRLRKNVKKLDKWAKQQGIECYRLYDADLPDYNVAVDRYGSKVVVQEYAPPKTIDPQKARQRLFDVINATLAVLELPSNQLVLKTRERQKGKNQYEKLAQKGEFLLVSEYNAKLWVNLTDYLDTGLFLDHRIARQMLGKMSQGKDFLNLFAYTGTASVHAGLGGARSTTTVDMSRTYLEWAEKNLRVNGLTGQQHRLIQADCLSWLSNTDEQFDVIFIDPPTFSNSKRMETTFDVQRDHLVLMKELKRLLRRKGTIMFSNNKRGFQMDLAGIAALGLEAKEITALTQSEDFARNRQIHNCWLVTHSQEEK</sequence>
<comment type="function">
    <text evidence="1">Specifically methylates the guanine in position 2445 (m2G2445) and the guanine in position 2069 (m7G2069) of 23S rRNA.</text>
</comment>
<comment type="catalytic activity">
    <reaction evidence="1">
        <text>guanosine(2445) in 23S rRNA + S-adenosyl-L-methionine = N(2)-methylguanosine(2445) in 23S rRNA + S-adenosyl-L-homocysteine + H(+)</text>
        <dbReference type="Rhea" id="RHEA:42740"/>
        <dbReference type="Rhea" id="RHEA-COMP:10215"/>
        <dbReference type="Rhea" id="RHEA-COMP:10216"/>
        <dbReference type="ChEBI" id="CHEBI:15378"/>
        <dbReference type="ChEBI" id="CHEBI:57856"/>
        <dbReference type="ChEBI" id="CHEBI:59789"/>
        <dbReference type="ChEBI" id="CHEBI:74269"/>
        <dbReference type="ChEBI" id="CHEBI:74481"/>
        <dbReference type="EC" id="2.1.1.173"/>
    </reaction>
</comment>
<comment type="catalytic activity">
    <reaction evidence="1">
        <text>guanosine(2069) in 23S rRNA + S-adenosyl-L-methionine = N(2)-methylguanosine(2069) in 23S rRNA + S-adenosyl-L-homocysteine + H(+)</text>
        <dbReference type="Rhea" id="RHEA:43772"/>
        <dbReference type="Rhea" id="RHEA-COMP:10688"/>
        <dbReference type="Rhea" id="RHEA-COMP:10689"/>
        <dbReference type="ChEBI" id="CHEBI:15378"/>
        <dbReference type="ChEBI" id="CHEBI:57856"/>
        <dbReference type="ChEBI" id="CHEBI:59789"/>
        <dbReference type="ChEBI" id="CHEBI:74269"/>
        <dbReference type="ChEBI" id="CHEBI:74481"/>
        <dbReference type="EC" id="2.1.1.264"/>
    </reaction>
</comment>
<comment type="subcellular location">
    <subcellularLocation>
        <location evidence="1">Cytoplasm</location>
    </subcellularLocation>
</comment>
<comment type="similarity">
    <text evidence="1">Belongs to the methyltransferase superfamily. RlmKL family.</text>
</comment>
<accession>Q1CA41</accession>
<proteinExistence type="inferred from homology"/>
<feature type="chain" id="PRO_0000366869" description="Ribosomal RNA large subunit methyltransferase K/L">
    <location>
        <begin position="1"/>
        <end position="706"/>
    </location>
</feature>
<feature type="domain" description="THUMP" evidence="1">
    <location>
        <begin position="43"/>
        <end position="154"/>
    </location>
</feature>